<keyword id="KW-1003">Cell membrane</keyword>
<keyword id="KW-0472">Membrane</keyword>
<keyword id="KW-1185">Reference proteome</keyword>
<keyword id="KW-0812">Transmembrane</keyword>
<keyword id="KW-1133">Transmembrane helix</keyword>
<evidence type="ECO:0000255" key="1"/>
<evidence type="ECO:0000305" key="2"/>
<reference key="1">
    <citation type="journal article" date="2002" name="Proc. Natl. Acad. Sci. U.S.A.">
        <title>Extensive mosaic structure revealed by the complete genome sequence of uropathogenic Escherichia coli.</title>
        <authorList>
            <person name="Welch R.A."/>
            <person name="Burland V."/>
            <person name="Plunkett G. III"/>
            <person name="Redford P."/>
            <person name="Roesch P."/>
            <person name="Rasko D."/>
            <person name="Buckles E.L."/>
            <person name="Liou S.-R."/>
            <person name="Boutin A."/>
            <person name="Hackett J."/>
            <person name="Stroud D."/>
            <person name="Mayhew G.F."/>
            <person name="Rose D.J."/>
            <person name="Zhou S."/>
            <person name="Schwartz D.C."/>
            <person name="Perna N.T."/>
            <person name="Mobley H.L.T."/>
            <person name="Donnenberg M.S."/>
            <person name="Blattner F.R."/>
        </authorList>
    </citation>
    <scope>NUCLEOTIDE SEQUENCE [LARGE SCALE GENOMIC DNA]</scope>
    <source>
        <strain>CFT073 / ATCC 700928 / UPEC</strain>
    </source>
</reference>
<accession>P64446</accession>
<accession>P76050</accession>
<proteinExistence type="predicted"/>
<gene>
    <name type="primary">ynaJ</name>
    <name type="ordered locus">c1805</name>
</gene>
<protein>
    <recommendedName>
        <fullName>Uncharacterized protein YnaJ</fullName>
    </recommendedName>
</protein>
<comment type="subcellular location">
    <subcellularLocation>
        <location evidence="2">Cell membrane</location>
        <topology evidence="2">Multi-pass membrane protein</topology>
    </subcellularLocation>
</comment>
<feature type="chain" id="PRO_0000168918" description="Uncharacterized protein YnaJ">
    <location>
        <begin position="1"/>
        <end position="85"/>
    </location>
</feature>
<feature type="transmembrane region" description="Helical" evidence="1">
    <location>
        <begin position="14"/>
        <end position="34"/>
    </location>
</feature>
<feature type="transmembrane region" description="Helical" evidence="1">
    <location>
        <begin position="60"/>
        <end position="80"/>
    </location>
</feature>
<dbReference type="EMBL" id="AE014075">
    <property type="protein sequence ID" value="AAN80269.1"/>
    <property type="molecule type" value="Genomic_DNA"/>
</dbReference>
<dbReference type="RefSeq" id="WP_000605090.1">
    <property type="nucleotide sequence ID" value="NZ_CP051263.1"/>
</dbReference>
<dbReference type="SMR" id="P64446"/>
<dbReference type="STRING" id="199310.c1805"/>
<dbReference type="KEGG" id="ecc:c1805"/>
<dbReference type="eggNOG" id="COG3182">
    <property type="taxonomic scope" value="Bacteria"/>
</dbReference>
<dbReference type="HOGENOM" id="CLU_168864_0_0_6"/>
<dbReference type="BioCyc" id="ECOL199310:C1805-MONOMER"/>
<dbReference type="Proteomes" id="UP000001410">
    <property type="component" value="Chromosome"/>
</dbReference>
<dbReference type="GO" id="GO:0005886">
    <property type="term" value="C:plasma membrane"/>
    <property type="evidence" value="ECO:0007669"/>
    <property type="project" value="UniProtKB-SubCell"/>
</dbReference>
<dbReference type="InterPro" id="IPR019685">
    <property type="entry name" value="DUF2534"/>
</dbReference>
<dbReference type="Pfam" id="PF10749">
    <property type="entry name" value="DUF2534"/>
    <property type="match status" value="1"/>
</dbReference>
<sequence length="85" mass="9339">MIMAKLKSAKGKKFLFGLLAVFIIAASVVTRATIGGVIEQYNIPLSEWTTSMYVIQSSMIFVYSLVFTVLLAIPLGIYFLGGEEQ</sequence>
<organism>
    <name type="scientific">Escherichia coli O6:H1 (strain CFT073 / ATCC 700928 / UPEC)</name>
    <dbReference type="NCBI Taxonomy" id="199310"/>
    <lineage>
        <taxon>Bacteria</taxon>
        <taxon>Pseudomonadati</taxon>
        <taxon>Pseudomonadota</taxon>
        <taxon>Gammaproteobacteria</taxon>
        <taxon>Enterobacterales</taxon>
        <taxon>Enterobacteriaceae</taxon>
        <taxon>Escherichia</taxon>
    </lineage>
</organism>
<name>YNAJ_ECOL6</name>